<proteinExistence type="inferred from homology"/>
<feature type="chain" id="PRO_1000149468" description="Methylenetetrahydrofolate--tRNA-(uracil-5-)-methyltransferase TrmFO">
    <location>
        <begin position="1"/>
        <end position="437"/>
    </location>
</feature>
<feature type="binding site" evidence="1">
    <location>
        <begin position="10"/>
        <end position="15"/>
    </location>
    <ligand>
        <name>FAD</name>
        <dbReference type="ChEBI" id="CHEBI:57692"/>
    </ligand>
</feature>
<reference key="1">
    <citation type="submission" date="2005-03" db="EMBL/GenBank/DDBJ databases">
        <title>Brevibacillus brevis strain 47, complete genome.</title>
        <authorList>
            <person name="Hosoyama A."/>
            <person name="Yamada R."/>
            <person name="Hongo Y."/>
            <person name="Terui Y."/>
            <person name="Ankai A."/>
            <person name="Masuyama W."/>
            <person name="Sekiguchi M."/>
            <person name="Takeda T."/>
            <person name="Asano K."/>
            <person name="Ohji S."/>
            <person name="Ichikawa N."/>
            <person name="Narita S."/>
            <person name="Aoki N."/>
            <person name="Miura H."/>
            <person name="Matsushita S."/>
            <person name="Sekigawa T."/>
            <person name="Yamagata H."/>
            <person name="Yoshikawa H."/>
            <person name="Udaka S."/>
            <person name="Tanikawa S."/>
            <person name="Fujita N."/>
        </authorList>
    </citation>
    <scope>NUCLEOTIDE SEQUENCE [LARGE SCALE GENOMIC DNA]</scope>
    <source>
        <strain>47 / JCM 6285 / NBRC 100599</strain>
    </source>
</reference>
<dbReference type="EC" id="2.1.1.74" evidence="1"/>
<dbReference type="EMBL" id="AP008955">
    <property type="protein sequence ID" value="BAH44468.1"/>
    <property type="molecule type" value="Genomic_DNA"/>
</dbReference>
<dbReference type="RefSeq" id="WP_015891766.1">
    <property type="nucleotide sequence ID" value="NC_012491.1"/>
</dbReference>
<dbReference type="SMR" id="C0ZFA9"/>
<dbReference type="STRING" id="358681.BBR47_34910"/>
<dbReference type="KEGG" id="bbe:BBR47_34910"/>
<dbReference type="eggNOG" id="COG1206">
    <property type="taxonomic scope" value="Bacteria"/>
</dbReference>
<dbReference type="HOGENOM" id="CLU_033057_1_0_9"/>
<dbReference type="Proteomes" id="UP000001877">
    <property type="component" value="Chromosome"/>
</dbReference>
<dbReference type="GO" id="GO:0005829">
    <property type="term" value="C:cytosol"/>
    <property type="evidence" value="ECO:0007669"/>
    <property type="project" value="TreeGrafter"/>
</dbReference>
<dbReference type="GO" id="GO:0050660">
    <property type="term" value="F:flavin adenine dinucleotide binding"/>
    <property type="evidence" value="ECO:0007669"/>
    <property type="project" value="UniProtKB-UniRule"/>
</dbReference>
<dbReference type="GO" id="GO:0047151">
    <property type="term" value="F:tRNA (uracil(54)-C5)-methyltransferase activity, 5,10-methylenetetrahydrofolate-dependent"/>
    <property type="evidence" value="ECO:0007669"/>
    <property type="project" value="UniProtKB-UniRule"/>
</dbReference>
<dbReference type="GO" id="GO:0030488">
    <property type="term" value="P:tRNA methylation"/>
    <property type="evidence" value="ECO:0007669"/>
    <property type="project" value="TreeGrafter"/>
</dbReference>
<dbReference type="GO" id="GO:0002098">
    <property type="term" value="P:tRNA wobble uridine modification"/>
    <property type="evidence" value="ECO:0007669"/>
    <property type="project" value="TreeGrafter"/>
</dbReference>
<dbReference type="FunFam" id="3.50.50.60:FF:000035">
    <property type="entry name" value="Methylenetetrahydrofolate--tRNA-(uracil-5-)-methyltransferase TrmFO"/>
    <property type="match status" value="1"/>
</dbReference>
<dbReference type="FunFam" id="3.50.50.60:FF:000040">
    <property type="entry name" value="Methylenetetrahydrofolate--tRNA-(uracil-5-)-methyltransferase TrmFO"/>
    <property type="match status" value="1"/>
</dbReference>
<dbReference type="Gene3D" id="3.50.50.60">
    <property type="entry name" value="FAD/NAD(P)-binding domain"/>
    <property type="match status" value="2"/>
</dbReference>
<dbReference type="HAMAP" id="MF_01037">
    <property type="entry name" value="TrmFO"/>
    <property type="match status" value="1"/>
</dbReference>
<dbReference type="InterPro" id="IPR036188">
    <property type="entry name" value="FAD/NAD-bd_sf"/>
</dbReference>
<dbReference type="InterPro" id="IPR002218">
    <property type="entry name" value="MnmG-rel"/>
</dbReference>
<dbReference type="InterPro" id="IPR020595">
    <property type="entry name" value="MnmG-rel_CS"/>
</dbReference>
<dbReference type="InterPro" id="IPR040131">
    <property type="entry name" value="MnmG_N"/>
</dbReference>
<dbReference type="InterPro" id="IPR004417">
    <property type="entry name" value="TrmFO"/>
</dbReference>
<dbReference type="NCBIfam" id="TIGR00137">
    <property type="entry name" value="gid_trmFO"/>
    <property type="match status" value="1"/>
</dbReference>
<dbReference type="NCBIfam" id="NF003739">
    <property type="entry name" value="PRK05335.1"/>
    <property type="match status" value="1"/>
</dbReference>
<dbReference type="PANTHER" id="PTHR11806">
    <property type="entry name" value="GLUCOSE INHIBITED DIVISION PROTEIN A"/>
    <property type="match status" value="1"/>
</dbReference>
<dbReference type="PANTHER" id="PTHR11806:SF2">
    <property type="entry name" value="METHYLENETETRAHYDROFOLATE--TRNA-(URACIL-5-)-METHYLTRANSFERASE TRMFO"/>
    <property type="match status" value="1"/>
</dbReference>
<dbReference type="Pfam" id="PF01134">
    <property type="entry name" value="GIDA"/>
    <property type="match status" value="1"/>
</dbReference>
<dbReference type="SUPFAM" id="SSF51905">
    <property type="entry name" value="FAD/NAD(P)-binding domain"/>
    <property type="match status" value="1"/>
</dbReference>
<dbReference type="PROSITE" id="PS01281">
    <property type="entry name" value="GIDA_2"/>
    <property type="match status" value="1"/>
</dbReference>
<accession>C0ZFA9</accession>
<organism>
    <name type="scientific">Brevibacillus brevis (strain 47 / JCM 6285 / NBRC 100599)</name>
    <dbReference type="NCBI Taxonomy" id="358681"/>
    <lineage>
        <taxon>Bacteria</taxon>
        <taxon>Bacillati</taxon>
        <taxon>Bacillota</taxon>
        <taxon>Bacilli</taxon>
        <taxon>Bacillales</taxon>
        <taxon>Paenibacillaceae</taxon>
        <taxon>Brevibacillus</taxon>
    </lineage>
</organism>
<comment type="function">
    <text evidence="1">Catalyzes the folate-dependent formation of 5-methyl-uridine at position 54 (M-5-U54) in all tRNAs.</text>
</comment>
<comment type="catalytic activity">
    <reaction evidence="1">
        <text>uridine(54) in tRNA + (6R)-5,10-methylene-5,6,7,8-tetrahydrofolate + NADH + H(+) = 5-methyluridine(54) in tRNA + (6S)-5,6,7,8-tetrahydrofolate + NAD(+)</text>
        <dbReference type="Rhea" id="RHEA:16873"/>
        <dbReference type="Rhea" id="RHEA-COMP:10167"/>
        <dbReference type="Rhea" id="RHEA-COMP:10193"/>
        <dbReference type="ChEBI" id="CHEBI:15378"/>
        <dbReference type="ChEBI" id="CHEBI:15636"/>
        <dbReference type="ChEBI" id="CHEBI:57453"/>
        <dbReference type="ChEBI" id="CHEBI:57540"/>
        <dbReference type="ChEBI" id="CHEBI:57945"/>
        <dbReference type="ChEBI" id="CHEBI:65315"/>
        <dbReference type="ChEBI" id="CHEBI:74447"/>
        <dbReference type="EC" id="2.1.1.74"/>
    </reaction>
</comment>
<comment type="catalytic activity">
    <reaction evidence="1">
        <text>uridine(54) in tRNA + (6R)-5,10-methylene-5,6,7,8-tetrahydrofolate + NADPH + H(+) = 5-methyluridine(54) in tRNA + (6S)-5,6,7,8-tetrahydrofolate + NADP(+)</text>
        <dbReference type="Rhea" id="RHEA:62372"/>
        <dbReference type="Rhea" id="RHEA-COMP:10167"/>
        <dbReference type="Rhea" id="RHEA-COMP:10193"/>
        <dbReference type="ChEBI" id="CHEBI:15378"/>
        <dbReference type="ChEBI" id="CHEBI:15636"/>
        <dbReference type="ChEBI" id="CHEBI:57453"/>
        <dbReference type="ChEBI" id="CHEBI:57783"/>
        <dbReference type="ChEBI" id="CHEBI:58349"/>
        <dbReference type="ChEBI" id="CHEBI:65315"/>
        <dbReference type="ChEBI" id="CHEBI:74447"/>
        <dbReference type="EC" id="2.1.1.74"/>
    </reaction>
</comment>
<comment type="cofactor">
    <cofactor evidence="1">
        <name>FAD</name>
        <dbReference type="ChEBI" id="CHEBI:57692"/>
    </cofactor>
</comment>
<comment type="subcellular location">
    <subcellularLocation>
        <location evidence="1">Cytoplasm</location>
    </subcellularLocation>
</comment>
<comment type="similarity">
    <text evidence="1">Belongs to the MnmG family. TrmFO subfamily.</text>
</comment>
<name>TRMFO_BREBN</name>
<keyword id="KW-0963">Cytoplasm</keyword>
<keyword id="KW-0274">FAD</keyword>
<keyword id="KW-0285">Flavoprotein</keyword>
<keyword id="KW-0489">Methyltransferase</keyword>
<keyword id="KW-0520">NAD</keyword>
<keyword id="KW-0521">NADP</keyword>
<keyword id="KW-1185">Reference proteome</keyword>
<keyword id="KW-0808">Transferase</keyword>
<keyword id="KW-0819">tRNA processing</keyword>
<gene>
    <name evidence="1" type="primary">trmFO</name>
    <name type="ordered locus">BBR47_34910</name>
</gene>
<protein>
    <recommendedName>
        <fullName evidence="1">Methylenetetrahydrofolate--tRNA-(uracil-5-)-methyltransferase TrmFO</fullName>
        <ecNumber evidence="1">2.1.1.74</ecNumber>
    </recommendedName>
    <alternativeName>
        <fullName evidence="1">Folate-dependent tRNA (uracil-5-)-methyltransferase</fullName>
    </alternativeName>
    <alternativeName>
        <fullName evidence="1">Folate-dependent tRNA(M-5-U54)-methyltransferase</fullName>
    </alternativeName>
</protein>
<evidence type="ECO:0000255" key="1">
    <source>
        <dbReference type="HAMAP-Rule" id="MF_01037"/>
    </source>
</evidence>
<sequence>MSQPTITVVGAGLAGSEAAWQIAQAGVKVKLYEMRPKTQTPAHHTDKFAELVCSNSLRANTLTNAVGVLKEEMRRLNSVIIDSADRCAVPAGGALAVDRHEFAAHVTDAVRNHPLVEVVSEEITEIPDGIVVIATGPLTSPALSTKLKELTGEEYLYFYDAAAPIIEKDSIDMNKVFVASRYDKGEAAYLNCPMTEEEFNRFYDALISAETVPLKEFEKEIFFEGCMPIEVLAKRGHKTMTFGPMKPVGLVDPRTGKKSYAVVQLRQDNSAATLYNIVGFQTHLKWPDQKRVFSLIPGLENCEIVRYGVMHRNTFINSPKLLKPTYQYKDRETLFFAGQMTGVEGYVESAASGLLAGINAARLAKGEELIELPPETIMGSMARYITTADPKHFQPMNANFGLVPEWPERIRDKRLKNEKLAERALDTIQNFTQERHN</sequence>